<feature type="chain" id="PRO_0000251909" description="Caveolin-2">
    <location>
        <begin position="1"/>
        <end position="162"/>
    </location>
</feature>
<feature type="topological domain" description="Cytoplasmic" evidence="4">
    <location>
        <begin position="1"/>
        <end position="86"/>
    </location>
</feature>
<feature type="intramembrane region" description="Helical" evidence="4">
    <location>
        <begin position="87"/>
        <end position="107"/>
    </location>
</feature>
<feature type="topological domain" description="Cytoplasmic" evidence="4">
    <location>
        <begin position="108"/>
        <end position="162"/>
    </location>
</feature>
<feature type="modified residue" description="Phosphotyrosine; by SRC" evidence="2">
    <location>
        <position position="19"/>
    </location>
</feature>
<feature type="modified residue" description="Phosphoserine" evidence="3">
    <location>
        <position position="20"/>
    </location>
</feature>
<feature type="modified residue" description="Phosphoserine" evidence="2">
    <location>
        <position position="23"/>
    </location>
</feature>
<feature type="modified residue" description="Phosphotyrosine; by SRC" evidence="2">
    <location>
        <position position="27"/>
    </location>
</feature>
<organism>
    <name type="scientific">Rhinolophus ferrumequinum</name>
    <name type="common">Greater horseshoe bat</name>
    <dbReference type="NCBI Taxonomy" id="59479"/>
    <lineage>
        <taxon>Eukaryota</taxon>
        <taxon>Metazoa</taxon>
        <taxon>Chordata</taxon>
        <taxon>Craniata</taxon>
        <taxon>Vertebrata</taxon>
        <taxon>Euteleostomi</taxon>
        <taxon>Mammalia</taxon>
        <taxon>Eutheria</taxon>
        <taxon>Laurasiatheria</taxon>
        <taxon>Chiroptera</taxon>
        <taxon>Yinpterochiroptera</taxon>
        <taxon>Rhinolophoidea</taxon>
        <taxon>Rhinolophidae</taxon>
        <taxon>Rhinolophinae</taxon>
        <taxon>Rhinolophus</taxon>
    </lineage>
</organism>
<evidence type="ECO:0000250" key="1"/>
<evidence type="ECO:0000250" key="2">
    <source>
        <dbReference type="UniProtKB" id="P51636"/>
    </source>
</evidence>
<evidence type="ECO:0000250" key="3">
    <source>
        <dbReference type="UniProtKB" id="Q9WVC3"/>
    </source>
</evidence>
<evidence type="ECO:0000255" key="4"/>
<evidence type="ECO:0000305" key="5"/>
<proteinExistence type="inferred from homology"/>
<comment type="function">
    <text evidence="1">May act as a scaffolding protein within caveolar membranes. Interacts directly with G-protein alpha subunits and can functionally regulate their activity. Acts as an accessory protein in conjunction with CAV1 in targeting to lipid rafts and driving caveolae formation. Positive regulator of cellular mitogenesis of the MAPK signaling pathway. Required for the insulin-stimulated nuclear translocation and activation of MAPK1 and STAT3, and the subsequent regulation of cell cycle progression (By similarity).</text>
</comment>
<comment type="subunit">
    <text evidence="1">Monomer or homodimer (By similarity). Interacts with CAV1; the interaction forms a stable heterooligomeric complex that is required for targeting to lipid rafts and for caveolae formation. Tyrosine phosphorylated forms do not form heterooligomers with the Tyr-19-phosphorylated form existing as a monomer or dimer, and the Tyr-27-form as a monomer only. Interacts (tyrosine phosphorylated form) with the SH2 domain-containing proteins, RASA1, NCK1 and SRC. Interacts (tyrosine phosphorylated form) with INSR, the interaction (Tyr-27-phosphorylated form) is increased on insulin stimulation. Interacts (Tyr-19 phosphorylated form) with MAPK1 (phosphorylated form); the interaction, promoted by insulin, leads to nuclear location and MAPK1 activation. Interacts with STAT3; the interaction is increased on insulin-induced tyrosine phosphorylation leading to STAT activation (By similarity).</text>
</comment>
<comment type="subcellular location">
    <subcellularLocation>
        <location evidence="1">Nucleus</location>
    </subcellularLocation>
    <subcellularLocation>
        <location evidence="1">Cytoplasm</location>
    </subcellularLocation>
    <subcellularLocation>
        <location>Golgi apparatus membrane</location>
        <topology>Peripheral membrane protein</topology>
    </subcellularLocation>
    <subcellularLocation>
        <location>Cell membrane</location>
        <topology>Peripheral membrane protein</topology>
    </subcellularLocation>
    <subcellularLocation>
        <location>Membrane</location>
        <location>Caveola</location>
        <topology>Peripheral membrane protein</topology>
    </subcellularLocation>
    <text evidence="1">Potential hairpin-like structure in the membrane. Membrane protein of caveolae. Tyr-19-phosphorylated form is enriched at sites of cell-cell contact and is translocated to the nucleus in complex with MAPK1 in response to insulin. Tyr-27-phosphorylated form is located both in the cytoplasm and plasma membrane. CAV1-mediated Ser-23-phosphorylated form locates to the plasma membrane (By similarity).</text>
</comment>
<comment type="PTM">
    <text evidence="1">Phosphorylated on serine and tyrosine residues. CAV1 promotes phosphorylation on Ser-23 which then targets the complex to the plasma membrane, lipid rafts and caveolae. Phosphorylation on both Tyr-19 and Tyr-27 is required for insulin-induced 'Ser-727' phosphorylation of STAT3 and its activation. Phosphorylation on Tyr-19 is required for insulin-induced phosphorylation of MAPK1 and DNA binding of STAT3. Tyrosine phosphorylation is induced by both EGF and insulin (By similarity).</text>
</comment>
<comment type="similarity">
    <text evidence="5">Belongs to the caveolin family.</text>
</comment>
<reference key="1">
    <citation type="submission" date="2006-01" db="EMBL/GenBank/DDBJ databases">
        <title>NISC comparative sequencing initiative.</title>
        <authorList>
            <person name="Antonellis A."/>
            <person name="Ayele K."/>
            <person name="Benjamin B."/>
            <person name="Blakesley R.W."/>
            <person name="Boakye A."/>
            <person name="Bouffard G.G."/>
            <person name="Brinkley C."/>
            <person name="Brooks S."/>
            <person name="Chu G."/>
            <person name="Coleman H."/>
            <person name="Engle J."/>
            <person name="Gestole M."/>
            <person name="Greene A."/>
            <person name="Guan X."/>
            <person name="Gupta J."/>
            <person name="Haghighi P."/>
            <person name="Han J."/>
            <person name="Hansen N."/>
            <person name="Ho S.-L."/>
            <person name="Hu P."/>
            <person name="Hunter G."/>
            <person name="Hurle B."/>
            <person name="Idol J.R."/>
            <person name="Kwong P."/>
            <person name="Laric P."/>
            <person name="Larson S."/>
            <person name="Lee-Lin S.-Q."/>
            <person name="Legaspi R."/>
            <person name="Madden M."/>
            <person name="Maduro Q.L."/>
            <person name="Maduro V.B."/>
            <person name="Margulies E.H."/>
            <person name="Masiello C."/>
            <person name="Maskeri B."/>
            <person name="McDowell J."/>
            <person name="Mojidi H.A."/>
            <person name="Mullikin J.C."/>
            <person name="Oestreicher J.S."/>
            <person name="Park M."/>
            <person name="Portnoy M.E."/>
            <person name="Prasad A."/>
            <person name="Puri O."/>
            <person name="Reddix-Dugue N."/>
            <person name="Schandler K."/>
            <person name="Schueler M.G."/>
            <person name="Sison C."/>
            <person name="Stantripop S."/>
            <person name="Stephen E."/>
            <person name="Taye A."/>
            <person name="Thomas J.W."/>
            <person name="Thomas P.J."/>
            <person name="Tsipouri V."/>
            <person name="Ung L."/>
            <person name="Vogt J.L."/>
            <person name="Wetherby K.D."/>
            <person name="Young A."/>
            <person name="Green E.D."/>
        </authorList>
    </citation>
    <scope>NUCLEOTIDE SEQUENCE [LARGE SCALE GENOMIC DNA]</scope>
</reference>
<sequence length="162" mass="17966">MGLETEKADVQLFMDDDSYSRHSGVDYADPEKFADAGGDRDPNQLNSHLKVGFEDVIAEPESTHSLDKVWICSHALFEVSKYVIYKFLTLFLAIPLAFAAGILFATLSCLHIWIVMPFVKTCLMVLPSVQTIWKSVTDVVIAPLCASVGRSFSSVSMQLSRD</sequence>
<gene>
    <name type="primary">CAV2</name>
</gene>
<keyword id="KW-1003">Cell membrane</keyword>
<keyword id="KW-0963">Cytoplasm</keyword>
<keyword id="KW-0333">Golgi apparatus</keyword>
<keyword id="KW-0472">Membrane</keyword>
<keyword id="KW-0539">Nucleus</keyword>
<keyword id="KW-0597">Phosphoprotein</keyword>
<keyword id="KW-1185">Reference proteome</keyword>
<name>CAV2_RHIFE</name>
<protein>
    <recommendedName>
        <fullName>Caveolin-2</fullName>
    </recommendedName>
</protein>
<accession>Q2IBC2</accession>
<dbReference type="EMBL" id="DP000028">
    <property type="protein sequence ID" value="ABC87470.1"/>
    <property type="molecule type" value="Genomic_DNA"/>
</dbReference>
<dbReference type="SMR" id="Q2IBC2"/>
<dbReference type="FunCoup" id="Q2IBC2">
    <property type="interactions" value="450"/>
</dbReference>
<dbReference type="InParanoid" id="Q2IBC2"/>
<dbReference type="Proteomes" id="UP000472240">
    <property type="component" value="Unplaced"/>
</dbReference>
<dbReference type="GO" id="GO:0005901">
    <property type="term" value="C:caveola"/>
    <property type="evidence" value="ECO:0000250"/>
    <property type="project" value="UniProtKB"/>
</dbReference>
<dbReference type="GO" id="GO:0031410">
    <property type="term" value="C:cytoplasmic vesicle"/>
    <property type="evidence" value="ECO:0007669"/>
    <property type="project" value="TreeGrafter"/>
</dbReference>
<dbReference type="GO" id="GO:0005925">
    <property type="term" value="C:focal adhesion"/>
    <property type="evidence" value="ECO:0007669"/>
    <property type="project" value="TreeGrafter"/>
</dbReference>
<dbReference type="GO" id="GO:0000139">
    <property type="term" value="C:Golgi membrane"/>
    <property type="evidence" value="ECO:0007669"/>
    <property type="project" value="UniProtKB-SubCell"/>
</dbReference>
<dbReference type="GO" id="GO:0005634">
    <property type="term" value="C:nucleus"/>
    <property type="evidence" value="ECO:0007669"/>
    <property type="project" value="UniProtKB-SubCell"/>
</dbReference>
<dbReference type="GO" id="GO:0048471">
    <property type="term" value="C:perinuclear region of cytoplasm"/>
    <property type="evidence" value="ECO:0000250"/>
    <property type="project" value="UniProtKB"/>
</dbReference>
<dbReference type="GO" id="GO:0044853">
    <property type="term" value="C:plasma membrane raft"/>
    <property type="evidence" value="ECO:0000250"/>
    <property type="project" value="UniProtKB"/>
</dbReference>
<dbReference type="GO" id="GO:0042383">
    <property type="term" value="C:sarcolemma"/>
    <property type="evidence" value="ECO:0007669"/>
    <property type="project" value="TreeGrafter"/>
</dbReference>
<dbReference type="GO" id="GO:0031748">
    <property type="term" value="F:D1 dopamine receptor binding"/>
    <property type="evidence" value="ECO:0000250"/>
    <property type="project" value="UniProtKB"/>
</dbReference>
<dbReference type="GO" id="GO:0060090">
    <property type="term" value="F:molecular adaptor activity"/>
    <property type="evidence" value="ECO:0007669"/>
    <property type="project" value="TreeGrafter"/>
</dbReference>
<dbReference type="GO" id="GO:0019901">
    <property type="term" value="F:protein kinase binding"/>
    <property type="evidence" value="ECO:0007669"/>
    <property type="project" value="TreeGrafter"/>
</dbReference>
<dbReference type="GO" id="GO:0070836">
    <property type="term" value="P:caveola assembly"/>
    <property type="evidence" value="ECO:0000250"/>
    <property type="project" value="UniProtKB"/>
</dbReference>
<dbReference type="GO" id="GO:0007029">
    <property type="term" value="P:endoplasmic reticulum organization"/>
    <property type="evidence" value="ECO:0000250"/>
    <property type="project" value="UniProtKB"/>
</dbReference>
<dbReference type="GO" id="GO:0008286">
    <property type="term" value="P:insulin receptor signaling pathway"/>
    <property type="evidence" value="ECO:0007669"/>
    <property type="project" value="TreeGrafter"/>
</dbReference>
<dbReference type="GO" id="GO:0007005">
    <property type="term" value="P:mitochondrion organization"/>
    <property type="evidence" value="ECO:0000250"/>
    <property type="project" value="UniProtKB"/>
</dbReference>
<dbReference type="GO" id="GO:0001937">
    <property type="term" value="P:negative regulation of endothelial cell proliferation"/>
    <property type="evidence" value="ECO:0000250"/>
    <property type="project" value="UniProtKB"/>
</dbReference>
<dbReference type="GO" id="GO:0060161">
    <property type="term" value="P:positive regulation of dopamine receptor signaling pathway"/>
    <property type="evidence" value="ECO:0000250"/>
    <property type="project" value="UniProtKB"/>
</dbReference>
<dbReference type="GO" id="GO:0051480">
    <property type="term" value="P:regulation of cytosolic calcium ion concentration"/>
    <property type="evidence" value="ECO:0007669"/>
    <property type="project" value="TreeGrafter"/>
</dbReference>
<dbReference type="GO" id="GO:0048741">
    <property type="term" value="P:skeletal muscle fiber development"/>
    <property type="evidence" value="ECO:0000250"/>
    <property type="project" value="UniProtKB"/>
</dbReference>
<dbReference type="GO" id="GO:0048278">
    <property type="term" value="P:vesicle docking"/>
    <property type="evidence" value="ECO:0000250"/>
    <property type="project" value="UniProtKB"/>
</dbReference>
<dbReference type="GO" id="GO:0006906">
    <property type="term" value="P:vesicle fusion"/>
    <property type="evidence" value="ECO:0000250"/>
    <property type="project" value="UniProtKB"/>
</dbReference>
<dbReference type="InterPro" id="IPR001612">
    <property type="entry name" value="Caveolin"/>
</dbReference>
<dbReference type="InterPro" id="IPR018361">
    <property type="entry name" value="Caveolin_CS"/>
</dbReference>
<dbReference type="PANTHER" id="PTHR10844">
    <property type="entry name" value="CAVEOLIN"/>
    <property type="match status" value="1"/>
</dbReference>
<dbReference type="PANTHER" id="PTHR10844:SF3">
    <property type="entry name" value="CAVEOLIN-2"/>
    <property type="match status" value="1"/>
</dbReference>
<dbReference type="Pfam" id="PF01146">
    <property type="entry name" value="Caveolin"/>
    <property type="match status" value="1"/>
</dbReference>
<dbReference type="PROSITE" id="PS01210">
    <property type="entry name" value="CAVEOLIN"/>
    <property type="match status" value="1"/>
</dbReference>